<proteinExistence type="evidence at protein level"/>
<sequence length="109" mass="11739">GDVEAGKAAFNKCKACHEIGESAKNKVGPELDGLDGRHSGAVEGYAYSPANKASGITWTEAEFKEYIKDPKAKVPGTKMVFAGIKKDSELDNLWAYVSQFDKDGKVKAK</sequence>
<feature type="chain" id="PRO_0000108385" description="Cytochrome c-550">
    <location>
        <begin position="1"/>
        <end position="109"/>
    </location>
</feature>
<feature type="binding site" description="covalent">
    <location>
        <position position="13"/>
    </location>
    <ligand>
        <name>heme c</name>
        <dbReference type="ChEBI" id="CHEBI:61717"/>
    </ligand>
</feature>
<feature type="binding site" description="covalent">
    <location>
        <position position="16"/>
    </location>
    <ligand>
        <name>heme c</name>
        <dbReference type="ChEBI" id="CHEBI:61717"/>
    </ligand>
</feature>
<feature type="binding site" description="axial binding residue">
    <location>
        <position position="17"/>
    </location>
    <ligand>
        <name>heme c</name>
        <dbReference type="ChEBI" id="CHEBI:61717"/>
    </ligand>
    <ligandPart>
        <name>Fe</name>
        <dbReference type="ChEBI" id="CHEBI:18248"/>
    </ligandPart>
</feature>
<feature type="binding site" description="axial binding residue">
    <location>
        <position position="79"/>
    </location>
    <ligand>
        <name>heme c</name>
        <dbReference type="ChEBI" id="CHEBI:61717"/>
    </ligand>
    <ligandPart>
        <name>Fe</name>
        <dbReference type="ChEBI" id="CHEBI:18248"/>
    </ligandPart>
</feature>
<comment type="PTM">
    <text>Binds 1 heme c group covalently per subunit.</text>
</comment>
<reference key="1">
    <citation type="journal article" date="1982" name="Biochim. Biophys. Acta">
        <title>The complete amino acid sequence of Nitrobacter agilis cytochrome c-550.</title>
        <authorList>
            <person name="Tanaka Y."/>
            <person name="Fukumori Y."/>
            <person name="Yamanaka T."/>
        </authorList>
    </citation>
    <scope>PROTEIN SEQUENCE</scope>
    <source>
        <strain>ATCC 14123 / NBRC 14297 / NB-6-2</strain>
    </source>
</reference>
<dbReference type="PIR" id="A00077">
    <property type="entry name" value="CCNA5A"/>
</dbReference>
<dbReference type="SMR" id="P00085"/>
<dbReference type="GO" id="GO:0009055">
    <property type="term" value="F:electron transfer activity"/>
    <property type="evidence" value="ECO:0007669"/>
    <property type="project" value="InterPro"/>
</dbReference>
<dbReference type="GO" id="GO:0020037">
    <property type="term" value="F:heme binding"/>
    <property type="evidence" value="ECO:0007669"/>
    <property type="project" value="InterPro"/>
</dbReference>
<dbReference type="GO" id="GO:0046872">
    <property type="term" value="F:metal ion binding"/>
    <property type="evidence" value="ECO:0007669"/>
    <property type="project" value="UniProtKB-KW"/>
</dbReference>
<dbReference type="Gene3D" id="1.10.760.10">
    <property type="entry name" value="Cytochrome c-like domain"/>
    <property type="match status" value="1"/>
</dbReference>
<dbReference type="InterPro" id="IPR009056">
    <property type="entry name" value="Cyt_c-like_dom"/>
</dbReference>
<dbReference type="InterPro" id="IPR036909">
    <property type="entry name" value="Cyt_c-like_dom_sf"/>
</dbReference>
<dbReference type="InterPro" id="IPR002327">
    <property type="entry name" value="Cyt_c_1A/1B"/>
</dbReference>
<dbReference type="PANTHER" id="PTHR11961">
    <property type="entry name" value="CYTOCHROME C"/>
    <property type="match status" value="1"/>
</dbReference>
<dbReference type="Pfam" id="PF00034">
    <property type="entry name" value="Cytochrom_C"/>
    <property type="match status" value="1"/>
</dbReference>
<dbReference type="PRINTS" id="PR00604">
    <property type="entry name" value="CYTCHRMECIAB"/>
</dbReference>
<dbReference type="SUPFAM" id="SSF46626">
    <property type="entry name" value="Cytochrome c"/>
    <property type="match status" value="1"/>
</dbReference>
<dbReference type="PROSITE" id="PS51007">
    <property type="entry name" value="CYTC"/>
    <property type="match status" value="1"/>
</dbReference>
<name>CY550_NITWI</name>
<accession>P00085</accession>
<keyword id="KW-0903">Direct protein sequencing</keyword>
<keyword id="KW-0249">Electron transport</keyword>
<keyword id="KW-0349">Heme</keyword>
<keyword id="KW-0408">Iron</keyword>
<keyword id="KW-0479">Metal-binding</keyword>
<keyword id="KW-0813">Transport</keyword>
<protein>
    <recommendedName>
        <fullName>Cytochrome c-550</fullName>
    </recommendedName>
    <alternativeName>
        <fullName>Cytochrome c550</fullName>
    </alternativeName>
</protein>
<organism>
    <name type="scientific">Nitrobacter winogradskyi</name>
    <name type="common">Nitrobacter agilis</name>
    <dbReference type="NCBI Taxonomy" id="913"/>
    <lineage>
        <taxon>Bacteria</taxon>
        <taxon>Pseudomonadati</taxon>
        <taxon>Pseudomonadota</taxon>
        <taxon>Alphaproteobacteria</taxon>
        <taxon>Hyphomicrobiales</taxon>
        <taxon>Nitrobacteraceae</taxon>
        <taxon>Nitrobacter</taxon>
    </lineage>
</organism>